<reference key="1">
    <citation type="journal article" date="2002" name="Genome Res.">
        <title>The genome of Methanosarcina acetivorans reveals extensive metabolic and physiological diversity.</title>
        <authorList>
            <person name="Galagan J.E."/>
            <person name="Nusbaum C."/>
            <person name="Roy A."/>
            <person name="Endrizzi M.G."/>
            <person name="Macdonald P."/>
            <person name="FitzHugh W."/>
            <person name="Calvo S."/>
            <person name="Engels R."/>
            <person name="Smirnov S."/>
            <person name="Atnoor D."/>
            <person name="Brown A."/>
            <person name="Allen N."/>
            <person name="Naylor J."/>
            <person name="Stange-Thomann N."/>
            <person name="DeArellano K."/>
            <person name="Johnson R."/>
            <person name="Linton L."/>
            <person name="McEwan P."/>
            <person name="McKernan K."/>
            <person name="Talamas J."/>
            <person name="Tirrell A."/>
            <person name="Ye W."/>
            <person name="Zimmer A."/>
            <person name="Barber R.D."/>
            <person name="Cann I."/>
            <person name="Graham D.E."/>
            <person name="Grahame D.A."/>
            <person name="Guss A.M."/>
            <person name="Hedderich R."/>
            <person name="Ingram-Smith C."/>
            <person name="Kuettner H.C."/>
            <person name="Krzycki J.A."/>
            <person name="Leigh J.A."/>
            <person name="Li W."/>
            <person name="Liu J."/>
            <person name="Mukhopadhyay B."/>
            <person name="Reeve J.N."/>
            <person name="Smith K."/>
            <person name="Springer T.A."/>
            <person name="Umayam L.A."/>
            <person name="White O."/>
            <person name="White R.H."/>
            <person name="de Macario E.C."/>
            <person name="Ferry J.G."/>
            <person name="Jarrell K.F."/>
            <person name="Jing H."/>
            <person name="Macario A.J.L."/>
            <person name="Paulsen I.T."/>
            <person name="Pritchett M."/>
            <person name="Sowers K.R."/>
            <person name="Swanson R.V."/>
            <person name="Zinder S.H."/>
            <person name="Lander E."/>
            <person name="Metcalf W.W."/>
            <person name="Birren B."/>
        </authorList>
    </citation>
    <scope>NUCLEOTIDE SEQUENCE [LARGE SCALE GENOMIC DNA]</scope>
    <source>
        <strain>ATCC 35395 / DSM 2834 / JCM 12185 / C2A</strain>
    </source>
</reference>
<sequence length="151" mass="16805">MLAGCYPRPGDLLTRVLATGTFDILHPGHVYFLTQARALGDELFVIIARDSNVTHKPKPIVPEEQRLEMVNALGTVDKALLGSEKDMFEPLKEIRPDIIVLGYDQHFDIELLEEELTKRGLPAKVVRVPLSKECPLCSTGAIIKAVLKRYG</sequence>
<comment type="function">
    <text evidence="1">Catalyzes the transfer of the AMP portion of ATP to flavin mononucleotide (FMN) to produce flavin adenine dinucleotide (FAD) coenzyme.</text>
</comment>
<comment type="catalytic activity">
    <reaction evidence="1">
        <text>FMN + ATP + H(+) = FAD + diphosphate</text>
        <dbReference type="Rhea" id="RHEA:17237"/>
        <dbReference type="ChEBI" id="CHEBI:15378"/>
        <dbReference type="ChEBI" id="CHEBI:30616"/>
        <dbReference type="ChEBI" id="CHEBI:33019"/>
        <dbReference type="ChEBI" id="CHEBI:57692"/>
        <dbReference type="ChEBI" id="CHEBI:58210"/>
        <dbReference type="EC" id="2.7.7.2"/>
    </reaction>
</comment>
<comment type="cofactor">
    <cofactor evidence="1">
        <name>a divalent metal cation</name>
        <dbReference type="ChEBI" id="CHEBI:60240"/>
    </cofactor>
</comment>
<comment type="pathway">
    <text evidence="1">Cofactor biosynthesis; FAD biosynthesis; FAD from FMN: step 1/1.</text>
</comment>
<comment type="subunit">
    <text evidence="1">Homodimer.</text>
</comment>
<comment type="similarity">
    <text evidence="1">Belongs to the archaeal FAD synthase family.</text>
</comment>
<evidence type="ECO:0000255" key="1">
    <source>
        <dbReference type="HAMAP-Rule" id="MF_02115"/>
    </source>
</evidence>
<protein>
    <recommendedName>
        <fullName evidence="1">FAD synthase</fullName>
        <ecNumber evidence="1">2.7.7.2</ecNumber>
    </recommendedName>
    <alternativeName>
        <fullName evidence="1">FMN adenylyltransferase</fullName>
    </alternativeName>
    <alternativeName>
        <fullName evidence="1">Flavin adenine dinucleotide synthase</fullName>
    </alternativeName>
</protein>
<dbReference type="EC" id="2.7.7.2" evidence="1"/>
<dbReference type="EMBL" id="AE010299">
    <property type="protein sequence ID" value="AAM05226.1"/>
    <property type="molecule type" value="Genomic_DNA"/>
</dbReference>
<dbReference type="RefSeq" id="WP_011021822.1">
    <property type="nucleotide sequence ID" value="NC_003552.1"/>
</dbReference>
<dbReference type="SMR" id="Q8TPT5"/>
<dbReference type="FunCoup" id="Q8TPT5">
    <property type="interactions" value="10"/>
</dbReference>
<dbReference type="STRING" id="188937.MA_1820"/>
<dbReference type="EnsemblBacteria" id="AAM05226">
    <property type="protein sequence ID" value="AAM05226"/>
    <property type="gene ID" value="MA_1820"/>
</dbReference>
<dbReference type="GeneID" id="1473709"/>
<dbReference type="KEGG" id="mac:MA_1820"/>
<dbReference type="HOGENOM" id="CLU_034585_2_1_2"/>
<dbReference type="InParanoid" id="Q8TPT5"/>
<dbReference type="OrthoDB" id="1912at2157"/>
<dbReference type="PhylomeDB" id="Q8TPT5"/>
<dbReference type="UniPathway" id="UPA00277">
    <property type="reaction ID" value="UER00407"/>
</dbReference>
<dbReference type="Proteomes" id="UP000002487">
    <property type="component" value="Chromosome"/>
</dbReference>
<dbReference type="GO" id="GO:0005524">
    <property type="term" value="F:ATP binding"/>
    <property type="evidence" value="ECO:0007669"/>
    <property type="project" value="UniProtKB-UniRule"/>
</dbReference>
<dbReference type="GO" id="GO:0003919">
    <property type="term" value="F:FMN adenylyltransferase activity"/>
    <property type="evidence" value="ECO:0007669"/>
    <property type="project" value="UniProtKB-UniRule"/>
</dbReference>
<dbReference type="GO" id="GO:0006747">
    <property type="term" value="P:FAD biosynthetic process"/>
    <property type="evidence" value="ECO:0007669"/>
    <property type="project" value="UniProtKB-UniRule"/>
</dbReference>
<dbReference type="GO" id="GO:0046444">
    <property type="term" value="P:FMN metabolic process"/>
    <property type="evidence" value="ECO:0007669"/>
    <property type="project" value="UniProtKB-UniRule"/>
</dbReference>
<dbReference type="CDD" id="cd02170">
    <property type="entry name" value="cytidylyltransferase"/>
    <property type="match status" value="1"/>
</dbReference>
<dbReference type="Gene3D" id="3.40.50.620">
    <property type="entry name" value="HUPs"/>
    <property type="match status" value="1"/>
</dbReference>
<dbReference type="HAMAP" id="MF_02115">
    <property type="entry name" value="FAD_synth_arch"/>
    <property type="match status" value="1"/>
</dbReference>
<dbReference type="InterPro" id="IPR050385">
    <property type="entry name" value="Archaeal_FAD_synthase"/>
</dbReference>
<dbReference type="InterPro" id="IPR004821">
    <property type="entry name" value="Cyt_trans-like"/>
</dbReference>
<dbReference type="InterPro" id="IPR024902">
    <property type="entry name" value="FAD_synth_RibL"/>
</dbReference>
<dbReference type="InterPro" id="IPR014729">
    <property type="entry name" value="Rossmann-like_a/b/a_fold"/>
</dbReference>
<dbReference type="NCBIfam" id="TIGR00125">
    <property type="entry name" value="cyt_tran_rel"/>
    <property type="match status" value="1"/>
</dbReference>
<dbReference type="PANTHER" id="PTHR43793">
    <property type="entry name" value="FAD SYNTHASE"/>
    <property type="match status" value="1"/>
</dbReference>
<dbReference type="PANTHER" id="PTHR43793:SF1">
    <property type="entry name" value="FAD SYNTHASE"/>
    <property type="match status" value="1"/>
</dbReference>
<dbReference type="Pfam" id="PF01467">
    <property type="entry name" value="CTP_transf_like"/>
    <property type="match status" value="1"/>
</dbReference>
<dbReference type="SUPFAM" id="SSF52374">
    <property type="entry name" value="Nucleotidylyl transferase"/>
    <property type="match status" value="1"/>
</dbReference>
<accession>Q8TPT5</accession>
<organism>
    <name type="scientific">Methanosarcina acetivorans (strain ATCC 35395 / DSM 2834 / JCM 12185 / C2A)</name>
    <dbReference type="NCBI Taxonomy" id="188937"/>
    <lineage>
        <taxon>Archaea</taxon>
        <taxon>Methanobacteriati</taxon>
        <taxon>Methanobacteriota</taxon>
        <taxon>Stenosarchaea group</taxon>
        <taxon>Methanomicrobia</taxon>
        <taxon>Methanosarcinales</taxon>
        <taxon>Methanosarcinaceae</taxon>
        <taxon>Methanosarcina</taxon>
    </lineage>
</organism>
<name>RIBL_METAC</name>
<proteinExistence type="inferred from homology"/>
<keyword id="KW-0067">ATP-binding</keyword>
<keyword id="KW-0274">FAD</keyword>
<keyword id="KW-0285">Flavoprotein</keyword>
<keyword id="KW-0288">FMN</keyword>
<keyword id="KW-0547">Nucleotide-binding</keyword>
<keyword id="KW-0548">Nucleotidyltransferase</keyword>
<keyword id="KW-1185">Reference proteome</keyword>
<keyword id="KW-0808">Transferase</keyword>
<gene>
    <name evidence="1" type="primary">ribL</name>
    <name type="ordered locus">MA_1820</name>
</gene>
<feature type="chain" id="PRO_0000406268" description="FAD synthase">
    <location>
        <begin position="1"/>
        <end position="151"/>
    </location>
</feature>
<feature type="binding site" evidence="1">
    <location>
        <begin position="21"/>
        <end position="22"/>
    </location>
    <ligand>
        <name>ATP</name>
        <dbReference type="ChEBI" id="CHEBI:30616"/>
    </ligand>
</feature>
<feature type="binding site" evidence="1">
    <location>
        <begin position="26"/>
        <end position="29"/>
    </location>
    <ligand>
        <name>ATP</name>
        <dbReference type="ChEBI" id="CHEBI:30616"/>
    </ligand>
</feature>
<feature type="binding site" evidence="1">
    <location>
        <position position="104"/>
    </location>
    <ligand>
        <name>ATP</name>
        <dbReference type="ChEBI" id="CHEBI:30616"/>
    </ligand>
</feature>